<dbReference type="EC" id="3.4.22.-"/>
<dbReference type="EMBL" id="U83277">
    <property type="protein sequence ID" value="AAB58260.1"/>
    <property type="molecule type" value="Genomic_DNA"/>
</dbReference>
<dbReference type="EMBL" id="AJ302013">
    <property type="protein sequence ID" value="CAC18648.1"/>
    <property type="molecule type" value="Genomic_DNA"/>
</dbReference>
<dbReference type="SMR" id="P92133"/>
<dbReference type="MEROPS" id="C01.094"/>
<dbReference type="VEuPathDB" id="GiardiaDB:DHA2_16779"/>
<dbReference type="VEuPathDB" id="GiardiaDB:GL50581_78"/>
<dbReference type="VEuPathDB" id="GiardiaDB:GL50803_0016779"/>
<dbReference type="VEuPathDB" id="GiardiaDB:QR46_3020"/>
<dbReference type="eggNOG" id="KOG1543">
    <property type="taxonomic scope" value="Eukaryota"/>
</dbReference>
<dbReference type="GO" id="GO:0005773">
    <property type="term" value="C:vacuole"/>
    <property type="evidence" value="ECO:0007669"/>
    <property type="project" value="UniProtKB-SubCell"/>
</dbReference>
<dbReference type="GO" id="GO:0008234">
    <property type="term" value="F:cysteine-type peptidase activity"/>
    <property type="evidence" value="ECO:0007669"/>
    <property type="project" value="UniProtKB-KW"/>
</dbReference>
<dbReference type="GO" id="GO:0006508">
    <property type="term" value="P:proteolysis"/>
    <property type="evidence" value="ECO:0007669"/>
    <property type="project" value="UniProtKB-KW"/>
</dbReference>
<dbReference type="CDD" id="cd02620">
    <property type="entry name" value="Peptidase_C1A_CathepsinB"/>
    <property type="match status" value="1"/>
</dbReference>
<dbReference type="FunFam" id="3.90.70.10:FF:000096">
    <property type="entry name" value="Cathepsin B-like cysteine protease"/>
    <property type="match status" value="1"/>
</dbReference>
<dbReference type="Gene3D" id="3.90.70.10">
    <property type="entry name" value="Cysteine proteinases"/>
    <property type="match status" value="1"/>
</dbReference>
<dbReference type="InterPro" id="IPR038765">
    <property type="entry name" value="Papain-like_cys_pep_sf"/>
</dbReference>
<dbReference type="InterPro" id="IPR025661">
    <property type="entry name" value="Pept_asp_AS"/>
</dbReference>
<dbReference type="InterPro" id="IPR000169">
    <property type="entry name" value="Pept_cys_AS"/>
</dbReference>
<dbReference type="InterPro" id="IPR025660">
    <property type="entry name" value="Pept_his_AS"/>
</dbReference>
<dbReference type="InterPro" id="IPR013128">
    <property type="entry name" value="Peptidase_C1A"/>
</dbReference>
<dbReference type="InterPro" id="IPR000668">
    <property type="entry name" value="Peptidase_C1A_C"/>
</dbReference>
<dbReference type="PANTHER" id="PTHR12411">
    <property type="entry name" value="CYSTEINE PROTEASE FAMILY C1-RELATED"/>
    <property type="match status" value="1"/>
</dbReference>
<dbReference type="Pfam" id="PF00112">
    <property type="entry name" value="Peptidase_C1"/>
    <property type="match status" value="1"/>
</dbReference>
<dbReference type="PRINTS" id="PR00705">
    <property type="entry name" value="PAPAIN"/>
</dbReference>
<dbReference type="SMART" id="SM00645">
    <property type="entry name" value="Pept_C1"/>
    <property type="match status" value="1"/>
</dbReference>
<dbReference type="SUPFAM" id="SSF54001">
    <property type="entry name" value="Cysteine proteinases"/>
    <property type="match status" value="1"/>
</dbReference>
<dbReference type="PROSITE" id="PS00640">
    <property type="entry name" value="THIOL_PROTEASE_ASN"/>
    <property type="match status" value="1"/>
</dbReference>
<dbReference type="PROSITE" id="PS00139">
    <property type="entry name" value="THIOL_PROTEASE_CYS"/>
    <property type="match status" value="1"/>
</dbReference>
<dbReference type="PROSITE" id="PS00639">
    <property type="entry name" value="THIOL_PROTEASE_HIS"/>
    <property type="match status" value="1"/>
</dbReference>
<gene>
    <name type="primary">CP3</name>
</gene>
<feature type="signal peptide" evidence="2">
    <location>
        <begin position="1"/>
        <end position="19"/>
    </location>
</feature>
<feature type="propeptide" id="PRO_0000026168" description="Activation peptide" evidence="1">
    <location>
        <begin position="20"/>
        <end status="unknown"/>
    </location>
</feature>
<feature type="chain" id="PRO_0000026169" description="Cathepsin B-like CP3">
    <location>
        <begin status="unknown"/>
        <end position="299"/>
    </location>
</feature>
<feature type="active site" evidence="1">
    <location>
        <position position="100"/>
    </location>
</feature>
<feature type="active site" evidence="1">
    <location>
        <position position="244"/>
    </location>
</feature>
<feature type="active site" evidence="1">
    <location>
        <position position="265"/>
    </location>
</feature>
<feature type="disulfide bond" evidence="1">
    <location>
        <begin position="87"/>
        <end position="114"/>
    </location>
</feature>
<feature type="disulfide bond" evidence="1">
    <location>
        <begin position="97"/>
        <end position="140"/>
    </location>
</feature>
<feature type="disulfide bond" evidence="1">
    <location>
        <begin position="133"/>
        <end position="176"/>
    </location>
</feature>
<sequence>MKLFLLAAAAFSAPALTVSELNHIKSLNPRWKAGIPKRFEGLTKDEISSLLMPVSFLKRDRAAVPRGTVSATQAPDSFDFREEYPHCIPEVVDQGGCGSCWAFSSVASVGDRRCFAGLDKKAVKYSPQYVVSCDRGDMACDGGWLPSVWRFLTKTGTTTDECVPYQSGSTGARGTCPTKCADGSDLPHLYKATKAVDYGLDAPAIMKALATGGPLQTAFTVYSDFMYYESGVYQHTYGRVEGGHAVDMVGYGTDDDGVDYWIIKNSWGPDWGEDGYFRIIRMTNECGIEEQVIGGFFEN</sequence>
<keyword id="KW-1015">Disulfide bond</keyword>
<keyword id="KW-0378">Hydrolase</keyword>
<keyword id="KW-0645">Protease</keyword>
<keyword id="KW-0732">Signal</keyword>
<keyword id="KW-0788">Thiol protease</keyword>
<keyword id="KW-0926">Vacuole</keyword>
<keyword id="KW-0865">Zymogen</keyword>
<evidence type="ECO:0000250" key="1"/>
<evidence type="ECO:0000255" key="2"/>
<evidence type="ECO:0000255" key="3">
    <source>
        <dbReference type="PROSITE-ProRule" id="PRU10088"/>
    </source>
</evidence>
<evidence type="ECO:0000255" key="4">
    <source>
        <dbReference type="PROSITE-ProRule" id="PRU10089"/>
    </source>
</evidence>
<evidence type="ECO:0000255" key="5">
    <source>
        <dbReference type="PROSITE-ProRule" id="PRU10090"/>
    </source>
</evidence>
<evidence type="ECO:0000269" key="6">
    <source>
    </source>
</evidence>
<organism>
    <name type="scientific">Giardia intestinalis</name>
    <name type="common">Giardia lamblia</name>
    <dbReference type="NCBI Taxonomy" id="5741"/>
    <lineage>
        <taxon>Eukaryota</taxon>
        <taxon>Metamonada</taxon>
        <taxon>Diplomonadida</taxon>
        <taxon>Hexamitidae</taxon>
        <taxon>Giardiinae</taxon>
        <taxon>Giardia</taxon>
    </lineage>
</organism>
<comment type="function">
    <text evidence="6">Thiol protease which is required for parasite excystation and invasion of the proximal small intestine of the human host.</text>
</comment>
<comment type="subcellular location">
    <subcellularLocation>
        <location evidence="6">Vacuole</location>
    </subcellularLocation>
</comment>
<comment type="developmental stage">
    <text evidence="6">To initiate infection, trophozoites emerge from a cyst in the host. Excystation is blocked by specific cysteine protease inhibitors. Vacuoles release it just prior to excystation. Expressed in replicating and encysting trophozoites without supplemental iron.</text>
</comment>
<comment type="similarity">
    <text evidence="3 4 5">Belongs to the peptidase C1 family.</text>
</comment>
<reference key="1">
    <citation type="journal article" date="1997" name="Cell">
        <title>A primitive enzyme for a primitive cell: the protease required for excystation of Giardia.</title>
        <authorList>
            <person name="Ward W."/>
            <person name="Alvarado L."/>
            <person name="Rawlings N.D."/>
            <person name="Engel J.C."/>
            <person name="Franklin C."/>
            <person name="McKerrow J.H."/>
        </authorList>
    </citation>
    <scope>NUCLEOTIDE SEQUENCE [GENOMIC DNA]</scope>
    <scope>FUNCTION</scope>
    <scope>SUBCELLULAR LOCATION</scope>
    <scope>DEVELOPMENTAL STAGE</scope>
    <source>
        <strain>ATCC 30957 / WB</strain>
    </source>
</reference>
<reference key="2">
    <citation type="journal article" date="2002" name="Mol. Biochem. Parasitol.">
        <title>Cysteine proteases of parasitic organisms.</title>
        <authorList>
            <person name="Sajid M."/>
            <person name="McKerrow J.H."/>
        </authorList>
    </citation>
    <scope>NUCLEOTIDE SEQUENCE [GENOMIC DNA]</scope>
    <source>
        <strain>ATCC 30957 / WB</strain>
    </source>
</reference>
<accession>P92133</accession>
<accession>Q9GP23</accession>
<proteinExistence type="evidence at transcript level"/>
<protein>
    <recommendedName>
        <fullName>Cathepsin B-like CP3</fullName>
        <ecNumber>3.4.22.-</ecNumber>
    </recommendedName>
    <alternativeName>
        <fullName>Cathepsin B-like protease B3</fullName>
    </alternativeName>
</protein>
<name>CATB3_GIAIN</name>